<name>SYD_SHEAM</name>
<reference key="1">
    <citation type="submission" date="2006-12" db="EMBL/GenBank/DDBJ databases">
        <title>Complete sequence of Shewanella amazonensis SB2B.</title>
        <authorList>
            <consortium name="US DOE Joint Genome Institute"/>
            <person name="Copeland A."/>
            <person name="Lucas S."/>
            <person name="Lapidus A."/>
            <person name="Barry K."/>
            <person name="Detter J.C."/>
            <person name="Glavina del Rio T."/>
            <person name="Hammon N."/>
            <person name="Israni S."/>
            <person name="Dalin E."/>
            <person name="Tice H."/>
            <person name="Pitluck S."/>
            <person name="Munk A.C."/>
            <person name="Brettin T."/>
            <person name="Bruce D."/>
            <person name="Han C."/>
            <person name="Tapia R."/>
            <person name="Gilna P."/>
            <person name="Schmutz J."/>
            <person name="Larimer F."/>
            <person name="Land M."/>
            <person name="Hauser L."/>
            <person name="Kyrpides N."/>
            <person name="Mikhailova N."/>
            <person name="Fredrickson J."/>
            <person name="Richardson P."/>
        </authorList>
    </citation>
    <scope>NUCLEOTIDE SEQUENCE [LARGE SCALE GENOMIC DNA]</scope>
    <source>
        <strain>ATCC BAA-1098 / SB2B</strain>
    </source>
</reference>
<protein>
    <recommendedName>
        <fullName evidence="1">Aspartate--tRNA ligase</fullName>
        <ecNumber evidence="1">6.1.1.12</ecNumber>
    </recommendedName>
    <alternativeName>
        <fullName evidence="1">Aspartyl-tRNA synthetase</fullName>
        <shortName evidence="1">AspRS</shortName>
    </alternativeName>
</protein>
<comment type="function">
    <text evidence="1">Catalyzes the attachment of L-aspartate to tRNA(Asp) in a two-step reaction: L-aspartate is first activated by ATP to form Asp-AMP and then transferred to the acceptor end of tRNA(Asp).</text>
</comment>
<comment type="catalytic activity">
    <reaction evidence="1">
        <text>tRNA(Asp) + L-aspartate + ATP = L-aspartyl-tRNA(Asp) + AMP + diphosphate</text>
        <dbReference type="Rhea" id="RHEA:19649"/>
        <dbReference type="Rhea" id="RHEA-COMP:9660"/>
        <dbReference type="Rhea" id="RHEA-COMP:9678"/>
        <dbReference type="ChEBI" id="CHEBI:29991"/>
        <dbReference type="ChEBI" id="CHEBI:30616"/>
        <dbReference type="ChEBI" id="CHEBI:33019"/>
        <dbReference type="ChEBI" id="CHEBI:78442"/>
        <dbReference type="ChEBI" id="CHEBI:78516"/>
        <dbReference type="ChEBI" id="CHEBI:456215"/>
        <dbReference type="EC" id="6.1.1.12"/>
    </reaction>
</comment>
<comment type="subunit">
    <text evidence="1">Homodimer.</text>
</comment>
<comment type="subcellular location">
    <subcellularLocation>
        <location evidence="1">Cytoplasm</location>
    </subcellularLocation>
</comment>
<comment type="similarity">
    <text evidence="1">Belongs to the class-II aminoacyl-tRNA synthetase family. Type 1 subfamily.</text>
</comment>
<feature type="chain" id="PRO_1000006752" description="Aspartate--tRNA ligase">
    <location>
        <begin position="1"/>
        <end position="591"/>
    </location>
</feature>
<feature type="region of interest" description="Aspartate" evidence="1">
    <location>
        <begin position="197"/>
        <end position="200"/>
    </location>
</feature>
<feature type="binding site" evidence="1">
    <location>
        <position position="173"/>
    </location>
    <ligand>
        <name>L-aspartate</name>
        <dbReference type="ChEBI" id="CHEBI:29991"/>
    </ligand>
</feature>
<feature type="binding site" evidence="1">
    <location>
        <begin position="219"/>
        <end position="221"/>
    </location>
    <ligand>
        <name>ATP</name>
        <dbReference type="ChEBI" id="CHEBI:30616"/>
    </ligand>
</feature>
<feature type="binding site" evidence="1">
    <location>
        <position position="219"/>
    </location>
    <ligand>
        <name>L-aspartate</name>
        <dbReference type="ChEBI" id="CHEBI:29991"/>
    </ligand>
</feature>
<feature type="binding site" evidence="1">
    <location>
        <position position="228"/>
    </location>
    <ligand>
        <name>ATP</name>
        <dbReference type="ChEBI" id="CHEBI:30616"/>
    </ligand>
</feature>
<feature type="binding site" evidence="1">
    <location>
        <position position="448"/>
    </location>
    <ligand>
        <name>L-aspartate</name>
        <dbReference type="ChEBI" id="CHEBI:29991"/>
    </ligand>
</feature>
<feature type="binding site" evidence="1">
    <location>
        <position position="482"/>
    </location>
    <ligand>
        <name>ATP</name>
        <dbReference type="ChEBI" id="CHEBI:30616"/>
    </ligand>
</feature>
<feature type="binding site" evidence="1">
    <location>
        <position position="489"/>
    </location>
    <ligand>
        <name>L-aspartate</name>
        <dbReference type="ChEBI" id="CHEBI:29991"/>
    </ligand>
</feature>
<feature type="binding site" evidence="1">
    <location>
        <begin position="534"/>
        <end position="537"/>
    </location>
    <ligand>
        <name>ATP</name>
        <dbReference type="ChEBI" id="CHEBI:30616"/>
    </ligand>
</feature>
<keyword id="KW-0030">Aminoacyl-tRNA synthetase</keyword>
<keyword id="KW-0067">ATP-binding</keyword>
<keyword id="KW-0963">Cytoplasm</keyword>
<keyword id="KW-0436">Ligase</keyword>
<keyword id="KW-0547">Nucleotide-binding</keyword>
<keyword id="KW-0648">Protein biosynthesis</keyword>
<keyword id="KW-1185">Reference proteome</keyword>
<evidence type="ECO:0000255" key="1">
    <source>
        <dbReference type="HAMAP-Rule" id="MF_00044"/>
    </source>
</evidence>
<proteinExistence type="inferred from homology"/>
<accession>A1S6P2</accession>
<organism>
    <name type="scientific">Shewanella amazonensis (strain ATCC BAA-1098 / SB2B)</name>
    <dbReference type="NCBI Taxonomy" id="326297"/>
    <lineage>
        <taxon>Bacteria</taxon>
        <taxon>Pseudomonadati</taxon>
        <taxon>Pseudomonadota</taxon>
        <taxon>Gammaproteobacteria</taxon>
        <taxon>Alteromonadales</taxon>
        <taxon>Shewanellaceae</taxon>
        <taxon>Shewanella</taxon>
    </lineage>
</organism>
<gene>
    <name evidence="1" type="primary">aspS</name>
    <name type="ordered locus">Sama_1843</name>
</gene>
<dbReference type="EC" id="6.1.1.12" evidence="1"/>
<dbReference type="EMBL" id="CP000507">
    <property type="protein sequence ID" value="ABM00049.1"/>
    <property type="molecule type" value="Genomic_DNA"/>
</dbReference>
<dbReference type="RefSeq" id="WP_011759956.1">
    <property type="nucleotide sequence ID" value="NC_008700.1"/>
</dbReference>
<dbReference type="SMR" id="A1S6P2"/>
<dbReference type="STRING" id="326297.Sama_1843"/>
<dbReference type="KEGG" id="saz:Sama_1843"/>
<dbReference type="eggNOG" id="COG0173">
    <property type="taxonomic scope" value="Bacteria"/>
</dbReference>
<dbReference type="HOGENOM" id="CLU_014330_3_2_6"/>
<dbReference type="OrthoDB" id="9802326at2"/>
<dbReference type="Proteomes" id="UP000009175">
    <property type="component" value="Chromosome"/>
</dbReference>
<dbReference type="GO" id="GO:0005737">
    <property type="term" value="C:cytoplasm"/>
    <property type="evidence" value="ECO:0007669"/>
    <property type="project" value="UniProtKB-SubCell"/>
</dbReference>
<dbReference type="GO" id="GO:0004815">
    <property type="term" value="F:aspartate-tRNA ligase activity"/>
    <property type="evidence" value="ECO:0007669"/>
    <property type="project" value="UniProtKB-UniRule"/>
</dbReference>
<dbReference type="GO" id="GO:0005524">
    <property type="term" value="F:ATP binding"/>
    <property type="evidence" value="ECO:0007669"/>
    <property type="project" value="UniProtKB-UniRule"/>
</dbReference>
<dbReference type="GO" id="GO:0003676">
    <property type="term" value="F:nucleic acid binding"/>
    <property type="evidence" value="ECO:0007669"/>
    <property type="project" value="InterPro"/>
</dbReference>
<dbReference type="GO" id="GO:0006422">
    <property type="term" value="P:aspartyl-tRNA aminoacylation"/>
    <property type="evidence" value="ECO:0007669"/>
    <property type="project" value="UniProtKB-UniRule"/>
</dbReference>
<dbReference type="CDD" id="cd00777">
    <property type="entry name" value="AspRS_core"/>
    <property type="match status" value="1"/>
</dbReference>
<dbReference type="CDD" id="cd04317">
    <property type="entry name" value="EcAspRS_like_N"/>
    <property type="match status" value="1"/>
</dbReference>
<dbReference type="FunFam" id="2.40.50.140:FF:000080">
    <property type="entry name" value="Aspartate--tRNA ligase"/>
    <property type="match status" value="1"/>
</dbReference>
<dbReference type="Gene3D" id="3.30.930.10">
    <property type="entry name" value="Bira Bifunctional Protein, Domain 2"/>
    <property type="match status" value="1"/>
</dbReference>
<dbReference type="Gene3D" id="3.30.1360.30">
    <property type="entry name" value="GAD-like domain"/>
    <property type="match status" value="1"/>
</dbReference>
<dbReference type="Gene3D" id="2.40.50.140">
    <property type="entry name" value="Nucleic acid-binding proteins"/>
    <property type="match status" value="1"/>
</dbReference>
<dbReference type="HAMAP" id="MF_00044">
    <property type="entry name" value="Asp_tRNA_synth_type1"/>
    <property type="match status" value="1"/>
</dbReference>
<dbReference type="InterPro" id="IPR004364">
    <property type="entry name" value="Aa-tRNA-synt_II"/>
</dbReference>
<dbReference type="InterPro" id="IPR006195">
    <property type="entry name" value="aa-tRNA-synth_II"/>
</dbReference>
<dbReference type="InterPro" id="IPR045864">
    <property type="entry name" value="aa-tRNA-synth_II/BPL/LPL"/>
</dbReference>
<dbReference type="InterPro" id="IPR004524">
    <property type="entry name" value="Asp-tRNA-ligase_1"/>
</dbReference>
<dbReference type="InterPro" id="IPR047089">
    <property type="entry name" value="Asp-tRNA-ligase_1_N"/>
</dbReference>
<dbReference type="InterPro" id="IPR002312">
    <property type="entry name" value="Asp/Asn-tRNA-synth_IIb"/>
</dbReference>
<dbReference type="InterPro" id="IPR047090">
    <property type="entry name" value="AspRS_core"/>
</dbReference>
<dbReference type="InterPro" id="IPR004115">
    <property type="entry name" value="GAD-like_sf"/>
</dbReference>
<dbReference type="InterPro" id="IPR029351">
    <property type="entry name" value="GAD_dom"/>
</dbReference>
<dbReference type="InterPro" id="IPR012340">
    <property type="entry name" value="NA-bd_OB-fold"/>
</dbReference>
<dbReference type="InterPro" id="IPR004365">
    <property type="entry name" value="NA-bd_OB_tRNA"/>
</dbReference>
<dbReference type="NCBIfam" id="TIGR00459">
    <property type="entry name" value="aspS_bact"/>
    <property type="match status" value="1"/>
</dbReference>
<dbReference type="NCBIfam" id="NF001750">
    <property type="entry name" value="PRK00476.1"/>
    <property type="match status" value="1"/>
</dbReference>
<dbReference type="PANTHER" id="PTHR22594:SF5">
    <property type="entry name" value="ASPARTATE--TRNA LIGASE, MITOCHONDRIAL"/>
    <property type="match status" value="1"/>
</dbReference>
<dbReference type="PANTHER" id="PTHR22594">
    <property type="entry name" value="ASPARTYL/LYSYL-TRNA SYNTHETASE"/>
    <property type="match status" value="1"/>
</dbReference>
<dbReference type="Pfam" id="PF02938">
    <property type="entry name" value="GAD"/>
    <property type="match status" value="1"/>
</dbReference>
<dbReference type="Pfam" id="PF00152">
    <property type="entry name" value="tRNA-synt_2"/>
    <property type="match status" value="1"/>
</dbReference>
<dbReference type="Pfam" id="PF01336">
    <property type="entry name" value="tRNA_anti-codon"/>
    <property type="match status" value="1"/>
</dbReference>
<dbReference type="PRINTS" id="PR01042">
    <property type="entry name" value="TRNASYNTHASP"/>
</dbReference>
<dbReference type="SUPFAM" id="SSF55681">
    <property type="entry name" value="Class II aaRS and biotin synthetases"/>
    <property type="match status" value="1"/>
</dbReference>
<dbReference type="SUPFAM" id="SSF55261">
    <property type="entry name" value="GAD domain-like"/>
    <property type="match status" value="1"/>
</dbReference>
<dbReference type="SUPFAM" id="SSF50249">
    <property type="entry name" value="Nucleic acid-binding proteins"/>
    <property type="match status" value="1"/>
</dbReference>
<dbReference type="PROSITE" id="PS50862">
    <property type="entry name" value="AA_TRNA_LIGASE_II"/>
    <property type="match status" value="1"/>
</dbReference>
<sequence length="591" mass="65825">MRSHYCGDVNKSHVGQEVTLVGWVNRSRDLGGVIFLDLRDREGLVQVVYDPDLPDVFDVASSLRAEFCVQVKGVVRPRPDSQVNSQMKTGEIEVLGKALTIINAADPLPLSLDNHQNNSEEARLKYRYLDLRRPEMAQRLIFRAKVTSFVRRFMDGNGFLDIETPILTKATPEGARDYLVPSRTYKGQFFALPQSPQLFKQLLMMSGFDRYYQIVKCFRDEDLRADRQPEFTQIDIETSFMTSDQVMETTERMIRNLFLELMNVDLGDFPKMTWDEAMRRFGSDKPDLRNPLELVDVADLLKAVEFAVFSGPANDEEGRVAALRIPGGAELSRKQIDDYTKFVGIYGARGLAWMKVNNLAAGVEGIQSPVAKFLNEDIIKEIIARTKAADGDIIFFGADKANVVAESMGALRLKAGEDFKLLEGEWRPLWVVDFPMFEKADGRFYAVHHPFTAPRGVTAAELEASPGKAVSDAYDMVLNGVELGGGSVRIHNGDMQSTVFRILGIDDEEAKEKFGFLLDALRFGTPPHAGLAFGLDRLVMLMTGASSIRDVMAFPKTTTAACPLTNAPGHANPDQLVELGIAVLPKEPKQD</sequence>